<feature type="chain" id="PRO_0000073635" description="Sarcoplasmic calcium-binding protein, beta chain">
    <location>
        <begin position="1"/>
        <end position="192"/>
    </location>
</feature>
<feature type="domain" description="EF-hand 1" evidence="1">
    <location>
        <begin position="4"/>
        <end position="39"/>
    </location>
</feature>
<feature type="domain" description="EF-hand 2" evidence="1">
    <location>
        <begin position="56"/>
        <end position="91"/>
    </location>
</feature>
<feature type="domain" description="EF-hand 3" evidence="1">
    <location>
        <begin position="100"/>
        <end position="135"/>
    </location>
</feature>
<feature type="domain" description="EF-hand 4" evidence="1">
    <location>
        <begin position="136"/>
        <end position="171"/>
    </location>
</feature>
<feature type="binding site" evidence="1">
    <location>
        <position position="17"/>
    </location>
    <ligand>
        <name>Ca(2+)</name>
        <dbReference type="ChEBI" id="CHEBI:29108"/>
        <label>1</label>
    </ligand>
</feature>
<feature type="binding site" evidence="1">
    <location>
        <position position="19"/>
    </location>
    <ligand>
        <name>Ca(2+)</name>
        <dbReference type="ChEBI" id="CHEBI:29108"/>
        <label>1</label>
    </ligand>
</feature>
<feature type="binding site" evidence="1">
    <location>
        <position position="21"/>
    </location>
    <ligand>
        <name>Ca(2+)</name>
        <dbReference type="ChEBI" id="CHEBI:29108"/>
        <label>1</label>
    </ligand>
</feature>
<feature type="binding site" evidence="1">
    <location>
        <position position="28"/>
    </location>
    <ligand>
        <name>Ca(2+)</name>
        <dbReference type="ChEBI" id="CHEBI:29108"/>
        <label>1</label>
    </ligand>
</feature>
<feature type="binding site" evidence="1">
    <location>
        <position position="69"/>
    </location>
    <ligand>
        <name>Ca(2+)</name>
        <dbReference type="ChEBI" id="CHEBI:29108"/>
        <label>2</label>
    </ligand>
</feature>
<feature type="binding site" evidence="1">
    <location>
        <position position="71"/>
    </location>
    <ligand>
        <name>Ca(2+)</name>
        <dbReference type="ChEBI" id="CHEBI:29108"/>
        <label>2</label>
    </ligand>
</feature>
<feature type="binding site" evidence="1">
    <location>
        <position position="73"/>
    </location>
    <ligand>
        <name>Ca(2+)</name>
        <dbReference type="ChEBI" id="CHEBI:29108"/>
        <label>2</label>
    </ligand>
</feature>
<feature type="binding site" evidence="1">
    <location>
        <position position="75"/>
    </location>
    <ligand>
        <name>Ca(2+)</name>
        <dbReference type="ChEBI" id="CHEBI:29108"/>
        <label>2</label>
    </ligand>
</feature>
<feature type="binding site" evidence="1">
    <location>
        <position position="80"/>
    </location>
    <ligand>
        <name>Ca(2+)</name>
        <dbReference type="ChEBI" id="CHEBI:29108"/>
        <label>2</label>
    </ligand>
</feature>
<feature type="binding site" evidence="1">
    <location>
        <position position="113"/>
    </location>
    <ligand>
        <name>Ca(2+)</name>
        <dbReference type="ChEBI" id="CHEBI:29108"/>
        <label>3</label>
    </ligand>
</feature>
<feature type="binding site" evidence="1">
    <location>
        <position position="115"/>
    </location>
    <ligand>
        <name>Ca(2+)</name>
        <dbReference type="ChEBI" id="CHEBI:29108"/>
        <label>3</label>
    </ligand>
</feature>
<feature type="binding site" evidence="1">
    <location>
        <position position="117"/>
    </location>
    <ligand>
        <name>Ca(2+)</name>
        <dbReference type="ChEBI" id="CHEBI:29108"/>
        <label>3</label>
    </ligand>
</feature>
<feature type="binding site" evidence="1">
    <location>
        <position position="119"/>
    </location>
    <ligand>
        <name>Ca(2+)</name>
        <dbReference type="ChEBI" id="CHEBI:29108"/>
        <label>3</label>
    </ligand>
</feature>
<feature type="binding site" evidence="1">
    <location>
        <position position="124"/>
    </location>
    <ligand>
        <name>Ca(2+)</name>
        <dbReference type="ChEBI" id="CHEBI:29108"/>
        <label>3</label>
    </ligand>
</feature>
<feature type="modified residue" description="N-acetylalanine" evidence="2">
    <location>
        <position position="1"/>
    </location>
</feature>
<accession>P02635</accession>
<evidence type="ECO:0000255" key="1">
    <source>
        <dbReference type="PROSITE-ProRule" id="PRU00448"/>
    </source>
</evidence>
<evidence type="ECO:0000269" key="2">
    <source>
    </source>
</evidence>
<name>SCPB_PENSP</name>
<protein>
    <recommendedName>
        <fullName>Sarcoplasmic calcium-binding protein, beta chain</fullName>
        <shortName>SCP beta chain</shortName>
    </recommendedName>
</protein>
<comment type="function">
    <text>Like parvalbumins, SCPs seem to be more abundant in fast contracting muscles, but no functional relationship can be established from this distribution.</text>
</comment>
<comment type="subunit">
    <text>SCPs from crayfish, lobster, and shrimp are polymorphic dimers; three isotypes (alpha-alpha, alpha-beta, and beta-beta) have been identified.</text>
</comment>
<comment type="miscellaneous">
    <text>The sarcoplasmic calcium-binding proteins are abundant in the muscle of arthropods, mollusks, annelids, and protochordates.</text>
</comment>
<comment type="miscellaneous">
    <text>This protein has three functional calcium-binding sites; potential site 4 has lost affinity for calcium.</text>
</comment>
<dbReference type="PIR" id="A03072">
    <property type="entry name" value="KLSSBS"/>
</dbReference>
<dbReference type="SMR" id="P02635"/>
<dbReference type="iPTMnet" id="P02635"/>
<dbReference type="GO" id="GO:0005509">
    <property type="term" value="F:calcium ion binding"/>
    <property type="evidence" value="ECO:0007669"/>
    <property type="project" value="InterPro"/>
</dbReference>
<dbReference type="Gene3D" id="1.10.238.10">
    <property type="entry name" value="EF-hand"/>
    <property type="match status" value="1"/>
</dbReference>
<dbReference type="InterPro" id="IPR011992">
    <property type="entry name" value="EF-hand-dom_pair"/>
</dbReference>
<dbReference type="InterPro" id="IPR018247">
    <property type="entry name" value="EF_Hand_1_Ca_BS"/>
</dbReference>
<dbReference type="InterPro" id="IPR002048">
    <property type="entry name" value="EF_hand_dom"/>
</dbReference>
<dbReference type="Pfam" id="PF13202">
    <property type="entry name" value="EF-hand_5"/>
    <property type="match status" value="1"/>
</dbReference>
<dbReference type="Pfam" id="PF13499">
    <property type="entry name" value="EF-hand_7"/>
    <property type="match status" value="1"/>
</dbReference>
<dbReference type="SMART" id="SM00054">
    <property type="entry name" value="EFh"/>
    <property type="match status" value="3"/>
</dbReference>
<dbReference type="SUPFAM" id="SSF47473">
    <property type="entry name" value="EF-hand"/>
    <property type="match status" value="1"/>
</dbReference>
<dbReference type="PROSITE" id="PS00018">
    <property type="entry name" value="EF_HAND_1"/>
    <property type="match status" value="3"/>
</dbReference>
<dbReference type="PROSITE" id="PS50222">
    <property type="entry name" value="EF_HAND_2"/>
    <property type="match status" value="3"/>
</dbReference>
<sequence>AYSWDNRVKYIVRYMYDIDNDGFLDKNDFECLAVRVTLIEGRGEFSPEGYAKNKEIMANLWNEIAELADFNKDGEVTVDEFKQAVQKNCKGKAFANFPNAFKVFIGNQFKTIDVDGDGMVGVDEYRLDCITRSAFADVKEIDDAYDKLCTEEDKKAGGINLARYQELYAQFISNEDEKNNACYLFGPLKEVQ</sequence>
<reference key="1">
    <citation type="journal article" date="1984" name="J. Biochem.">
        <title>Amino acid sequence of the beta chain of sarcoplasmic calcium binding protein (SCP) obtained from shrimp tail muscle.</title>
        <authorList>
            <person name="Takagi T."/>
            <person name="Konishi K."/>
        </authorList>
    </citation>
    <scope>PROTEIN SEQUENCE</scope>
    <scope>ACETYLATION AT ALA-1</scope>
</reference>
<organism>
    <name type="scientific">Penaeus sp.</name>
    <name type="common">Penoeid shrimp</name>
    <dbReference type="NCBI Taxonomy" id="6688"/>
    <lineage>
        <taxon>Eukaryota</taxon>
        <taxon>Metazoa</taxon>
        <taxon>Ecdysozoa</taxon>
        <taxon>Arthropoda</taxon>
        <taxon>Crustacea</taxon>
        <taxon>Multicrustacea</taxon>
        <taxon>Malacostraca</taxon>
        <taxon>Eumalacostraca</taxon>
        <taxon>Eucarida</taxon>
        <taxon>Decapoda</taxon>
        <taxon>Dendrobranchiata</taxon>
        <taxon>Penaeoidea</taxon>
        <taxon>Penaeidae</taxon>
    </lineage>
</organism>
<keyword id="KW-0007">Acetylation</keyword>
<keyword id="KW-0106">Calcium</keyword>
<keyword id="KW-0903">Direct protein sequencing</keyword>
<keyword id="KW-0479">Metal-binding</keyword>
<keyword id="KW-0514">Muscle protein</keyword>
<keyword id="KW-0677">Repeat</keyword>
<proteinExistence type="evidence at protein level"/>